<sequence>MSNGIVIIGSGFAARQLVKNIRKQDATIPLTLIAADSIDEYNKPDLSHVISQGQRADDLTRQTAGEFAGQFNLRLFPHTWVTDIDAEAHVVKSQNNQWQYDKLVLATGASAFVPPVPGRELMLTLNSQQEYRACETQLRDARRVLIVGGGLIGSELAMDFCRAGKAVTLIDNAASILASLMPPEVSSRLQHRLTEMGVHLLLKSQLQGLEKTDSGILATLDHQRSIEVDAVIAATGLRPETALARRAGLTINRGVCVDSYLQTSNADIYALGDCAEINGQVLPFLQPIQLSGMVLAKNLLGNNTPLKLPAMLVKIKTPELPLHLAGETQRQDLRWQINTERQGMVARGVDDADQLRAFVVSEDRMKEAFVLLKTLPV</sequence>
<feature type="chain" id="PRO_0000305612" description="Nitric oxide reductase FlRd-NAD(+) reductase">
    <location>
        <begin position="1"/>
        <end position="377"/>
    </location>
</feature>
<reference key="1">
    <citation type="journal article" date="2006" name="BMC Genomics">
        <title>Complete genome sequence of Shigella flexneri 5b and comparison with Shigella flexneri 2a.</title>
        <authorList>
            <person name="Nie H."/>
            <person name="Yang F."/>
            <person name="Zhang X."/>
            <person name="Yang J."/>
            <person name="Chen L."/>
            <person name="Wang J."/>
            <person name="Xiong Z."/>
            <person name="Peng J."/>
            <person name="Sun L."/>
            <person name="Dong J."/>
            <person name="Xue Y."/>
            <person name="Xu X."/>
            <person name="Chen S."/>
            <person name="Yao Z."/>
            <person name="Shen Y."/>
            <person name="Jin Q."/>
        </authorList>
    </citation>
    <scope>NUCLEOTIDE SEQUENCE [LARGE SCALE GENOMIC DNA]</scope>
    <source>
        <strain>8401</strain>
    </source>
</reference>
<comment type="function">
    <text evidence="1">One of at least two accessory proteins for anaerobic nitric oxide (NO) reductase. Reduces the rubredoxin moiety of NO reductase.</text>
</comment>
<comment type="catalytic activity">
    <reaction evidence="1">
        <text>2 reduced [nitric oxide reductase rubredoxin domain] + NAD(+) + H(+) = 2 oxidized [nitric oxide reductase rubredoxin domain] + NADH</text>
        <dbReference type="Rhea" id="RHEA:42960"/>
        <dbReference type="Rhea" id="RHEA-COMP:10304"/>
        <dbReference type="Rhea" id="RHEA-COMP:10305"/>
        <dbReference type="ChEBI" id="CHEBI:15378"/>
        <dbReference type="ChEBI" id="CHEBI:29033"/>
        <dbReference type="ChEBI" id="CHEBI:29034"/>
        <dbReference type="ChEBI" id="CHEBI:57540"/>
        <dbReference type="ChEBI" id="CHEBI:57945"/>
    </reaction>
</comment>
<comment type="cofactor">
    <cofactor evidence="1">
        <name>FAD</name>
        <dbReference type="ChEBI" id="CHEBI:57692"/>
    </cofactor>
</comment>
<comment type="pathway">
    <text evidence="1">Nitrogen metabolism; nitric oxide reduction.</text>
</comment>
<comment type="subcellular location">
    <subcellularLocation>
        <location evidence="1">Cytoplasm</location>
    </subcellularLocation>
</comment>
<comment type="similarity">
    <text evidence="1">Belongs to the FAD-dependent oxidoreductase family.</text>
</comment>
<proteinExistence type="inferred from homology"/>
<protein>
    <recommendedName>
        <fullName evidence="1">Nitric oxide reductase FlRd-NAD(+) reductase</fullName>
        <ecNumber evidence="1">1.18.1.-</ecNumber>
    </recommendedName>
    <alternativeName>
        <fullName evidence="1">Flavorubredoxin reductase</fullName>
        <shortName evidence="1">FlRd-reductase</shortName>
        <shortName evidence="1">FlavoRb reductase</shortName>
    </alternativeName>
</protein>
<organism>
    <name type="scientific">Shigella flexneri serotype 5b (strain 8401)</name>
    <dbReference type="NCBI Taxonomy" id="373384"/>
    <lineage>
        <taxon>Bacteria</taxon>
        <taxon>Pseudomonadati</taxon>
        <taxon>Pseudomonadota</taxon>
        <taxon>Gammaproteobacteria</taxon>
        <taxon>Enterobacterales</taxon>
        <taxon>Enterobacteriaceae</taxon>
        <taxon>Shigella</taxon>
    </lineage>
</organism>
<name>NORW_SHIF8</name>
<dbReference type="EC" id="1.18.1.-" evidence="1"/>
<dbReference type="EMBL" id="CP000266">
    <property type="protein sequence ID" value="ABF04879.1"/>
    <property type="molecule type" value="Genomic_DNA"/>
</dbReference>
<dbReference type="RefSeq" id="WP_000064736.1">
    <property type="nucleotide sequence ID" value="NC_008258.1"/>
</dbReference>
<dbReference type="SMR" id="Q0T1D6"/>
<dbReference type="KEGG" id="sfv:SFV_2794"/>
<dbReference type="HOGENOM" id="CLU_003291_4_4_6"/>
<dbReference type="UniPathway" id="UPA00638"/>
<dbReference type="Proteomes" id="UP000000659">
    <property type="component" value="Chromosome"/>
</dbReference>
<dbReference type="GO" id="GO:0005737">
    <property type="term" value="C:cytoplasm"/>
    <property type="evidence" value="ECO:0007669"/>
    <property type="project" value="UniProtKB-SubCell"/>
</dbReference>
<dbReference type="GO" id="GO:0016731">
    <property type="term" value="F:oxidoreductase activity, acting on iron-sulfur proteins as donors, NAD or NADP as acceptor"/>
    <property type="evidence" value="ECO:0007669"/>
    <property type="project" value="UniProtKB-UniRule"/>
</dbReference>
<dbReference type="FunFam" id="3.30.390.120:FF:000001">
    <property type="entry name" value="Nitric oxide reductase FlRd-NAD(+) reductase"/>
    <property type="match status" value="1"/>
</dbReference>
<dbReference type="FunFam" id="3.50.50.60:FF:000075">
    <property type="entry name" value="Nitric oxide reductase FlRd-NAD(+) reductase"/>
    <property type="match status" value="1"/>
</dbReference>
<dbReference type="Gene3D" id="3.30.390.120">
    <property type="match status" value="1"/>
</dbReference>
<dbReference type="Gene3D" id="3.50.50.60">
    <property type="entry name" value="FAD/NAD(P)-binding domain"/>
    <property type="match status" value="2"/>
</dbReference>
<dbReference type="HAMAP" id="MF_01313">
    <property type="entry name" value="NorW"/>
    <property type="match status" value="1"/>
</dbReference>
<dbReference type="InterPro" id="IPR050260">
    <property type="entry name" value="FAD-bd_OxRdtase"/>
</dbReference>
<dbReference type="InterPro" id="IPR036188">
    <property type="entry name" value="FAD/NAD-bd_sf"/>
</dbReference>
<dbReference type="InterPro" id="IPR023753">
    <property type="entry name" value="FAD/NAD-binding_dom"/>
</dbReference>
<dbReference type="InterPro" id="IPR023961">
    <property type="entry name" value="NO_rdtase_NorW"/>
</dbReference>
<dbReference type="InterPro" id="IPR041364">
    <property type="entry name" value="Rbx-bd"/>
</dbReference>
<dbReference type="NCBIfam" id="NF003437">
    <property type="entry name" value="PRK04965.1"/>
    <property type="match status" value="1"/>
</dbReference>
<dbReference type="PANTHER" id="PTHR43429:SF3">
    <property type="entry name" value="NITRITE REDUCTASE [NAD(P)H]"/>
    <property type="match status" value="1"/>
</dbReference>
<dbReference type="PANTHER" id="PTHR43429">
    <property type="entry name" value="PYRIDINE NUCLEOTIDE-DISULFIDE OXIDOREDUCTASE DOMAIN-CONTAINING"/>
    <property type="match status" value="1"/>
</dbReference>
<dbReference type="Pfam" id="PF07992">
    <property type="entry name" value="Pyr_redox_2"/>
    <property type="match status" value="1"/>
</dbReference>
<dbReference type="Pfam" id="PF18113">
    <property type="entry name" value="Rbx_binding"/>
    <property type="match status" value="1"/>
</dbReference>
<dbReference type="PRINTS" id="PR00368">
    <property type="entry name" value="FADPNR"/>
</dbReference>
<dbReference type="PRINTS" id="PR00411">
    <property type="entry name" value="PNDRDTASEI"/>
</dbReference>
<dbReference type="SUPFAM" id="SSF51905">
    <property type="entry name" value="FAD/NAD(P)-binding domain"/>
    <property type="match status" value="1"/>
</dbReference>
<evidence type="ECO:0000255" key="1">
    <source>
        <dbReference type="HAMAP-Rule" id="MF_01313"/>
    </source>
</evidence>
<gene>
    <name evidence="1" type="primary">norW</name>
    <name evidence="1" type="synonym">flrR</name>
    <name type="ordered locus">SFV_2794</name>
</gene>
<accession>Q0T1D6</accession>
<keyword id="KW-0963">Cytoplasm</keyword>
<keyword id="KW-0274">FAD</keyword>
<keyword id="KW-0285">Flavoprotein</keyword>
<keyword id="KW-0520">NAD</keyword>
<keyword id="KW-0560">Oxidoreductase</keyword>